<dbReference type="EC" id="1.4.99.-" evidence="1"/>
<dbReference type="EMBL" id="BA000040">
    <property type="protein sequence ID" value="BAC47487.1"/>
    <property type="molecule type" value="Genomic_DNA"/>
</dbReference>
<dbReference type="RefSeq" id="NP_768862.1">
    <property type="nucleotide sequence ID" value="NC_004463.1"/>
</dbReference>
<dbReference type="RefSeq" id="WP_011085010.1">
    <property type="nucleotide sequence ID" value="NC_004463.1"/>
</dbReference>
<dbReference type="SMR" id="Q89T28"/>
<dbReference type="FunCoup" id="Q89T28">
    <property type="interactions" value="609"/>
</dbReference>
<dbReference type="STRING" id="224911.AAV28_07985"/>
<dbReference type="EnsemblBacteria" id="BAC47487">
    <property type="protein sequence ID" value="BAC47487"/>
    <property type="gene ID" value="BAC47487"/>
</dbReference>
<dbReference type="GeneID" id="46489268"/>
<dbReference type="KEGG" id="bja:blr2222"/>
<dbReference type="PATRIC" id="fig|224911.44.peg.1754"/>
<dbReference type="eggNOG" id="COG0665">
    <property type="taxonomic scope" value="Bacteria"/>
</dbReference>
<dbReference type="HOGENOM" id="CLU_007884_9_2_5"/>
<dbReference type="InParanoid" id="Q89T28"/>
<dbReference type="OrthoDB" id="9805337at2"/>
<dbReference type="PhylomeDB" id="Q89T28"/>
<dbReference type="Proteomes" id="UP000002526">
    <property type="component" value="Chromosome"/>
</dbReference>
<dbReference type="GO" id="GO:0005737">
    <property type="term" value="C:cytoplasm"/>
    <property type="evidence" value="ECO:0000318"/>
    <property type="project" value="GO_Central"/>
</dbReference>
<dbReference type="GO" id="GO:0005886">
    <property type="term" value="C:plasma membrane"/>
    <property type="evidence" value="ECO:0000318"/>
    <property type="project" value="GO_Central"/>
</dbReference>
<dbReference type="GO" id="GO:0008718">
    <property type="term" value="F:D-amino-acid dehydrogenase activity"/>
    <property type="evidence" value="ECO:0000318"/>
    <property type="project" value="GO_Central"/>
</dbReference>
<dbReference type="GO" id="GO:0015079">
    <property type="term" value="F:potassium ion transmembrane transporter activity"/>
    <property type="evidence" value="ECO:0007669"/>
    <property type="project" value="InterPro"/>
</dbReference>
<dbReference type="GO" id="GO:0055130">
    <property type="term" value="P:D-alanine catabolic process"/>
    <property type="evidence" value="ECO:0000318"/>
    <property type="project" value="GO_Central"/>
</dbReference>
<dbReference type="FunFam" id="3.50.50.60:FF:000020">
    <property type="entry name" value="D-amino acid dehydrogenase"/>
    <property type="match status" value="1"/>
</dbReference>
<dbReference type="Gene3D" id="3.30.9.10">
    <property type="entry name" value="D-Amino Acid Oxidase, subunit A, domain 2"/>
    <property type="match status" value="1"/>
</dbReference>
<dbReference type="Gene3D" id="3.50.50.60">
    <property type="entry name" value="FAD/NAD(P)-binding domain"/>
    <property type="match status" value="2"/>
</dbReference>
<dbReference type="HAMAP" id="MF_01202">
    <property type="entry name" value="DadA"/>
    <property type="match status" value="1"/>
</dbReference>
<dbReference type="InterPro" id="IPR023080">
    <property type="entry name" value="DadA"/>
</dbReference>
<dbReference type="InterPro" id="IPR006076">
    <property type="entry name" value="FAD-dep_OxRdtase"/>
</dbReference>
<dbReference type="InterPro" id="IPR036188">
    <property type="entry name" value="FAD/NAD-bd_sf"/>
</dbReference>
<dbReference type="InterPro" id="IPR006036">
    <property type="entry name" value="K_uptake_TrkA"/>
</dbReference>
<dbReference type="NCBIfam" id="NF001933">
    <property type="entry name" value="PRK00711.1"/>
    <property type="match status" value="1"/>
</dbReference>
<dbReference type="PANTHER" id="PTHR13847:SF280">
    <property type="entry name" value="D-AMINO ACID DEHYDROGENASE"/>
    <property type="match status" value="1"/>
</dbReference>
<dbReference type="PANTHER" id="PTHR13847">
    <property type="entry name" value="SARCOSINE DEHYDROGENASE-RELATED"/>
    <property type="match status" value="1"/>
</dbReference>
<dbReference type="Pfam" id="PF01266">
    <property type="entry name" value="DAO"/>
    <property type="match status" value="1"/>
</dbReference>
<dbReference type="PRINTS" id="PR00335">
    <property type="entry name" value="KUPTAKETRKA"/>
</dbReference>
<dbReference type="SUPFAM" id="SSF54373">
    <property type="entry name" value="FAD-linked reductases, C-terminal domain"/>
    <property type="match status" value="1"/>
</dbReference>
<dbReference type="SUPFAM" id="SSF51905">
    <property type="entry name" value="FAD/NAD(P)-binding domain"/>
    <property type="match status" value="1"/>
</dbReference>
<protein>
    <recommendedName>
        <fullName evidence="1">D-amino acid dehydrogenase</fullName>
        <ecNumber evidence="1">1.4.99.-</ecNumber>
    </recommendedName>
</protein>
<sequence length="421" mass="45326">MKVLILGSGVIGVTSAYYLAGAGHDVTVVDRQPEPALETSFANAGEVSPGYSSPWAGPGVPVKAVKWLLMKHGPLVIRPKLDPVMWVWLLKMLRNCTSARYAVNKSRMIPIAEYSRDCLRDLRRDIGIQYDERSQGTLQLFRHQAQLDGTGEDIAVLKQYGVPFEVLGREGCIAVEPALAGVKEKFAGGLRLPQDETGDCHMFTQALAKHAQALGVRFMFNTGIDRIVTDGARVSGVVTSAGVLQADAYVLALGSWSSRLVAPLGISLPVYPVKGYSITVPIKDASGAPESTVMDESYKVAITRLGNRIRVGGTAEISGFSSKLYDARRATLDHSLTDLFPRGGDLSKATFWSGLRPMTPDGPPVIGPTQYANLHLNTGHGTLGWTMSCGSGRVLADMLSGKKPEVDVSALTVDRYAHRFG</sequence>
<feature type="chain" id="PRO_0000166127" description="D-amino acid dehydrogenase">
    <location>
        <begin position="1"/>
        <end position="421"/>
    </location>
</feature>
<feature type="binding site" evidence="1">
    <location>
        <begin position="3"/>
        <end position="17"/>
    </location>
    <ligand>
        <name>FAD</name>
        <dbReference type="ChEBI" id="CHEBI:57692"/>
    </ligand>
</feature>
<organism>
    <name type="scientific">Bradyrhizobium diazoefficiens (strain JCM 10833 / BCRC 13528 / IAM 13628 / NBRC 14792 / USDA 110)</name>
    <dbReference type="NCBI Taxonomy" id="224911"/>
    <lineage>
        <taxon>Bacteria</taxon>
        <taxon>Pseudomonadati</taxon>
        <taxon>Pseudomonadota</taxon>
        <taxon>Alphaproteobacteria</taxon>
        <taxon>Hyphomicrobiales</taxon>
        <taxon>Nitrobacteraceae</taxon>
        <taxon>Bradyrhizobium</taxon>
    </lineage>
</organism>
<evidence type="ECO:0000255" key="1">
    <source>
        <dbReference type="HAMAP-Rule" id="MF_01202"/>
    </source>
</evidence>
<reference key="1">
    <citation type="journal article" date="2002" name="DNA Res.">
        <title>Complete genomic sequence of nitrogen-fixing symbiotic bacterium Bradyrhizobium japonicum USDA110.</title>
        <authorList>
            <person name="Kaneko T."/>
            <person name="Nakamura Y."/>
            <person name="Sato S."/>
            <person name="Minamisawa K."/>
            <person name="Uchiumi T."/>
            <person name="Sasamoto S."/>
            <person name="Watanabe A."/>
            <person name="Idesawa K."/>
            <person name="Iriguchi M."/>
            <person name="Kawashima K."/>
            <person name="Kohara M."/>
            <person name="Matsumoto M."/>
            <person name="Shimpo S."/>
            <person name="Tsuruoka H."/>
            <person name="Wada T."/>
            <person name="Yamada M."/>
            <person name="Tabata S."/>
        </authorList>
    </citation>
    <scope>NUCLEOTIDE SEQUENCE [LARGE SCALE GENOMIC DNA]</scope>
    <source>
        <strain>JCM 10833 / BCRC 13528 / IAM 13628 / NBRC 14792 / USDA 110</strain>
    </source>
</reference>
<keyword id="KW-0274">FAD</keyword>
<keyword id="KW-0285">Flavoprotein</keyword>
<keyword id="KW-0560">Oxidoreductase</keyword>
<keyword id="KW-1185">Reference proteome</keyword>
<gene>
    <name evidence="1" type="primary">dadA</name>
    <name type="ordered locus">blr2222</name>
</gene>
<accession>Q89T28</accession>
<name>DADA_BRADU</name>
<proteinExistence type="inferred from homology"/>
<comment type="function">
    <text evidence="1">Oxidative deamination of D-amino acids.</text>
</comment>
<comment type="catalytic activity">
    <reaction evidence="1">
        <text>a D-alpha-amino acid + A + H2O = a 2-oxocarboxylate + AH2 + NH4(+)</text>
        <dbReference type="Rhea" id="RHEA:18125"/>
        <dbReference type="ChEBI" id="CHEBI:13193"/>
        <dbReference type="ChEBI" id="CHEBI:15377"/>
        <dbReference type="ChEBI" id="CHEBI:17499"/>
        <dbReference type="ChEBI" id="CHEBI:28938"/>
        <dbReference type="ChEBI" id="CHEBI:35179"/>
        <dbReference type="ChEBI" id="CHEBI:59871"/>
    </reaction>
</comment>
<comment type="cofactor">
    <cofactor evidence="1">
        <name>FAD</name>
        <dbReference type="ChEBI" id="CHEBI:57692"/>
    </cofactor>
</comment>
<comment type="similarity">
    <text evidence="1">Belongs to the DadA oxidoreductase family.</text>
</comment>